<reference key="1">
    <citation type="journal article" date="1995" name="J. Bacteriol.">
        <title>Analysis of a Coxiella burnetti gene product that activates capsule synthesis in Escherichia coli: requirement for the heat shock chaperone DnaK and the two-component regulator RcsC.</title>
        <authorList>
            <person name="Zuber M."/>
            <person name="Hoover T.A."/>
            <person name="Court D.L."/>
        </authorList>
    </citation>
    <scope>NUCLEOTIDE SEQUENCE [GENOMIC DNA]</scope>
    <source>
        <strain>Nine Mile</strain>
    </source>
</reference>
<reference key="2">
    <citation type="journal article" date="2003" name="Proc. Natl. Acad. Sci. U.S.A.">
        <title>Complete genome sequence of the Q-fever pathogen, Coxiella burnetii.</title>
        <authorList>
            <person name="Seshadri R."/>
            <person name="Paulsen I.T."/>
            <person name="Eisen J.A."/>
            <person name="Read T.D."/>
            <person name="Nelson K.E."/>
            <person name="Nelson W.C."/>
            <person name="Ward N.L."/>
            <person name="Tettelin H."/>
            <person name="Davidsen T.M."/>
            <person name="Beanan M.J."/>
            <person name="DeBoy R.T."/>
            <person name="Daugherty S.C."/>
            <person name="Brinkac L.M."/>
            <person name="Madupu R."/>
            <person name="Dodson R.J."/>
            <person name="Khouri H.M."/>
            <person name="Lee K.H."/>
            <person name="Carty H.A."/>
            <person name="Scanlan D."/>
            <person name="Heinzen R.A."/>
            <person name="Thompson H.A."/>
            <person name="Samuel J.E."/>
            <person name="Fraser C.M."/>
            <person name="Heidelberg J.F."/>
        </authorList>
    </citation>
    <scope>NUCLEOTIDE SEQUENCE [LARGE SCALE GENOMIC DNA]</scope>
    <source>
        <strain>RSA 493 / Nine Mile phase I</strain>
    </source>
</reference>
<dbReference type="EMBL" id="L42518">
    <property type="protein sequence ID" value="AAA79969.1"/>
    <property type="molecule type" value="Genomic_DNA"/>
</dbReference>
<dbReference type="EMBL" id="AE016828">
    <property type="protein sequence ID" value="AAO91364.1"/>
    <property type="status" value="ALT_INIT"/>
    <property type="molecule type" value="Genomic_DNA"/>
</dbReference>
<dbReference type="PIR" id="I40852">
    <property type="entry name" value="I40852"/>
</dbReference>
<dbReference type="RefSeq" id="NP_820850.1">
    <property type="nucleotide sequence ID" value="NC_002971.3"/>
</dbReference>
<dbReference type="SMR" id="Q45885"/>
<dbReference type="STRING" id="227377.CBU_1873"/>
<dbReference type="EnsemblBacteria" id="AAO91364">
    <property type="protein sequence ID" value="AAO91364"/>
    <property type="gene ID" value="CBU_1873"/>
</dbReference>
<dbReference type="GeneID" id="1209786"/>
<dbReference type="KEGG" id="cbu:CBU_1873"/>
<dbReference type="PATRIC" id="fig|227377.7.peg.1855"/>
<dbReference type="eggNOG" id="COG1076">
    <property type="taxonomic scope" value="Bacteria"/>
</dbReference>
<dbReference type="HOGENOM" id="CLU_066221_1_0_6"/>
<dbReference type="OrthoDB" id="9782583at2"/>
<dbReference type="Proteomes" id="UP000002671">
    <property type="component" value="Chromosome"/>
</dbReference>
<dbReference type="GO" id="GO:0005886">
    <property type="term" value="C:plasma membrane"/>
    <property type="evidence" value="ECO:0007669"/>
    <property type="project" value="UniProtKB-SubCell"/>
</dbReference>
<dbReference type="GO" id="GO:0051087">
    <property type="term" value="F:protein-folding chaperone binding"/>
    <property type="evidence" value="ECO:0007669"/>
    <property type="project" value="InterPro"/>
</dbReference>
<dbReference type="CDD" id="cd06257">
    <property type="entry name" value="DnaJ"/>
    <property type="match status" value="1"/>
</dbReference>
<dbReference type="CDD" id="cd07316">
    <property type="entry name" value="terB_like_DjlA"/>
    <property type="match status" value="1"/>
</dbReference>
<dbReference type="FunFam" id="1.10.3680.10:FF:000001">
    <property type="entry name" value="Co-chaperone protein DjlA"/>
    <property type="match status" value="1"/>
</dbReference>
<dbReference type="Gene3D" id="1.10.287.110">
    <property type="entry name" value="DnaJ domain"/>
    <property type="match status" value="1"/>
</dbReference>
<dbReference type="Gene3D" id="1.10.3680.10">
    <property type="entry name" value="TerB-like"/>
    <property type="match status" value="1"/>
</dbReference>
<dbReference type="HAMAP" id="MF_01153">
    <property type="entry name" value="DjlA"/>
    <property type="match status" value="1"/>
</dbReference>
<dbReference type="InterPro" id="IPR023749">
    <property type="entry name" value="DjlA"/>
</dbReference>
<dbReference type="InterPro" id="IPR050817">
    <property type="entry name" value="DjlA_DnaK_co-chaperone"/>
</dbReference>
<dbReference type="InterPro" id="IPR007791">
    <property type="entry name" value="DjlA_N"/>
</dbReference>
<dbReference type="InterPro" id="IPR001623">
    <property type="entry name" value="DnaJ_domain"/>
</dbReference>
<dbReference type="InterPro" id="IPR036869">
    <property type="entry name" value="J_dom_sf"/>
</dbReference>
<dbReference type="InterPro" id="IPR029024">
    <property type="entry name" value="TerB-like"/>
</dbReference>
<dbReference type="NCBIfam" id="NF006948">
    <property type="entry name" value="PRK09430.1"/>
    <property type="match status" value="1"/>
</dbReference>
<dbReference type="PANTHER" id="PTHR24074">
    <property type="entry name" value="CO-CHAPERONE PROTEIN DJLA"/>
    <property type="match status" value="1"/>
</dbReference>
<dbReference type="Pfam" id="PF00226">
    <property type="entry name" value="DnaJ"/>
    <property type="match status" value="1"/>
</dbReference>
<dbReference type="Pfam" id="PF05099">
    <property type="entry name" value="TerB"/>
    <property type="match status" value="1"/>
</dbReference>
<dbReference type="PRINTS" id="PR00625">
    <property type="entry name" value="JDOMAIN"/>
</dbReference>
<dbReference type="SMART" id="SM00271">
    <property type="entry name" value="DnaJ"/>
    <property type="match status" value="1"/>
</dbReference>
<dbReference type="SUPFAM" id="SSF46565">
    <property type="entry name" value="Chaperone J-domain"/>
    <property type="match status" value="1"/>
</dbReference>
<dbReference type="PROSITE" id="PS50076">
    <property type="entry name" value="DNAJ_2"/>
    <property type="match status" value="1"/>
</dbReference>
<organism>
    <name type="scientific">Coxiella burnetii (strain RSA 493 / Nine Mile phase I)</name>
    <dbReference type="NCBI Taxonomy" id="227377"/>
    <lineage>
        <taxon>Bacteria</taxon>
        <taxon>Pseudomonadati</taxon>
        <taxon>Pseudomonadota</taxon>
        <taxon>Gammaproteobacteria</taxon>
        <taxon>Legionellales</taxon>
        <taxon>Coxiellaceae</taxon>
        <taxon>Coxiella</taxon>
    </lineage>
</organism>
<gene>
    <name evidence="1" type="primary">djlA</name>
    <name type="synonym">mucZ</name>
    <name type="ordered locus">CBU_1873</name>
</gene>
<name>DJLA_COXBU</name>
<keyword id="KW-0997">Cell inner membrane</keyword>
<keyword id="KW-1003">Cell membrane</keyword>
<keyword id="KW-0143">Chaperone</keyword>
<keyword id="KW-0472">Membrane</keyword>
<keyword id="KW-1185">Reference proteome</keyword>
<keyword id="KW-0812">Transmembrane</keyword>
<keyword id="KW-1133">Transmembrane helix</keyword>
<sequence>MNWIGKLIGMMLGFILAGPIGLIIGLFIGHVVFDQGRFRQWFQTTASARSQPSKIQEVFFNTTFRVMGFVAKADGRVSENEIRQARQVMQQMNLDDSMKREAIRLFTEGKQPNFNLDESLNELRQACVFQPALLRVFLEIQIQMASADGQGLSGQKRQVLQTICRRLEVFGFDYNQFEQRFRAEQNYQRYQQRATQDPRAYLNDAYKVLGLTSAATDSEIKKSYRRLMSQHHPDKLMAKGLPPEMMKMATQKTQQIKKAYEQIRKVRSMV</sequence>
<comment type="function">
    <text evidence="1">Regulatory DnaK co-chaperone. Direct interaction between DnaK and DjlA is needed for the induction of the wcaABCDE operon, involved in the synthesis of a colanic acid polysaccharide capsule, possibly through activation of the RcsB/RcsC phosphotransfer signaling pathway. The colanic acid capsule may help the bacterium survive conditions outside the host.</text>
</comment>
<comment type="subunit">
    <text evidence="1">Homodimer.</text>
</comment>
<comment type="subcellular location">
    <subcellularLocation>
        <location evidence="1">Cell inner membrane</location>
        <topology evidence="1">Single-pass type III membrane protein</topology>
    </subcellularLocation>
</comment>
<comment type="domain">
    <text evidence="1">The transmembrane domain is a dimerization domain.</text>
</comment>
<comment type="sequence caution" evidence="2">
    <conflict type="erroneous initiation">
        <sequence resource="EMBL-CDS" id="AAO91364"/>
    </conflict>
</comment>
<feature type="chain" id="PRO_0000209423" description="Co-chaperone protein DjlA">
    <location>
        <begin position="1"/>
        <end position="270"/>
    </location>
</feature>
<feature type="topological domain" description="Periplasmic" evidence="1">
    <location>
        <begin position="1"/>
        <end position="6"/>
    </location>
</feature>
<feature type="transmembrane region" description="Helical" evidence="1">
    <location>
        <begin position="7"/>
        <end position="30"/>
    </location>
</feature>
<feature type="topological domain" description="Cytoplasmic" evidence="1">
    <location>
        <begin position="31"/>
        <end position="270"/>
    </location>
</feature>
<feature type="domain" description="J" evidence="1">
    <location>
        <begin position="204"/>
        <end position="270"/>
    </location>
</feature>
<accession>Q45885</accession>
<proteinExistence type="inferred from homology"/>
<protein>
    <recommendedName>
        <fullName evidence="1">Co-chaperone protein DjlA</fullName>
    </recommendedName>
    <alternativeName>
        <fullName>Mucoidy activation protein MucZ</fullName>
    </alternativeName>
</protein>
<evidence type="ECO:0000255" key="1">
    <source>
        <dbReference type="HAMAP-Rule" id="MF_01153"/>
    </source>
</evidence>
<evidence type="ECO:0000305" key="2"/>